<proteinExistence type="evidence at protein level"/>
<keyword id="KW-0002">3D-structure</keyword>
<keyword id="KW-0687">Ribonucleoprotein</keyword>
<keyword id="KW-0689">Ribosomal protein</keyword>
<organism>
    <name type="scientific">Pyrococcus abyssi (strain GE5 / Orsay)</name>
    <dbReference type="NCBI Taxonomy" id="272844"/>
    <lineage>
        <taxon>Archaea</taxon>
        <taxon>Methanobacteriati</taxon>
        <taxon>Methanobacteriota</taxon>
        <taxon>Thermococci</taxon>
        <taxon>Thermococcales</taxon>
        <taxon>Thermococcaceae</taxon>
        <taxon>Pyrococcus</taxon>
    </lineage>
</organism>
<dbReference type="EMBL" id="AJ248283">
    <property type="protein sequence ID" value="CAB48991.1"/>
    <property type="status" value="ALT_INIT"/>
    <property type="molecule type" value="Genomic_DNA"/>
</dbReference>
<dbReference type="EMBL" id="HE613800">
    <property type="protein sequence ID" value="CCE69440.1"/>
    <property type="molecule type" value="Genomic_DNA"/>
</dbReference>
<dbReference type="PIR" id="H75192">
    <property type="entry name" value="H75192"/>
</dbReference>
<dbReference type="RefSeq" id="WP_048147211.1">
    <property type="nucleotide sequence ID" value="NC_000868.1"/>
</dbReference>
<dbReference type="PDB" id="6SW9">
    <property type="method" value="EM"/>
    <property type="resolution" value="4.20 A"/>
    <property type="chains" value="A=1-199"/>
</dbReference>
<dbReference type="PDB" id="6SWC">
    <property type="method" value="EM"/>
    <property type="resolution" value="3.30 A"/>
    <property type="chains" value="A=1-199"/>
</dbReference>
<dbReference type="PDB" id="6SWD">
    <property type="method" value="EM"/>
    <property type="resolution" value="3.20 A"/>
    <property type="chains" value="A=1-199"/>
</dbReference>
<dbReference type="PDB" id="7ZAG">
    <property type="method" value="EM"/>
    <property type="resolution" value="2.77 A"/>
    <property type="chains" value="A=1-199"/>
</dbReference>
<dbReference type="PDB" id="7ZAH">
    <property type="method" value="EM"/>
    <property type="resolution" value="2.70 A"/>
    <property type="chains" value="A=1-199"/>
</dbReference>
<dbReference type="PDB" id="7ZAI">
    <property type="method" value="EM"/>
    <property type="resolution" value="2.60 A"/>
    <property type="chains" value="A=1-199"/>
</dbReference>
<dbReference type="PDB" id="7ZHG">
    <property type="method" value="EM"/>
    <property type="resolution" value="2.25 A"/>
    <property type="chains" value="A=1-199"/>
</dbReference>
<dbReference type="PDBsum" id="6SW9"/>
<dbReference type="PDBsum" id="6SWC"/>
<dbReference type="PDBsum" id="6SWD"/>
<dbReference type="PDBsum" id="7ZAG"/>
<dbReference type="PDBsum" id="7ZAH"/>
<dbReference type="PDBsum" id="7ZAI"/>
<dbReference type="PDBsum" id="7ZHG"/>
<dbReference type="EMDB" id="EMD-10320"/>
<dbReference type="EMDB" id="EMD-10322"/>
<dbReference type="EMDB" id="EMD-10323"/>
<dbReference type="EMDB" id="EMD-14579"/>
<dbReference type="EMDB" id="EMD-14580"/>
<dbReference type="EMDB" id="EMD-14581"/>
<dbReference type="EMDB" id="EMD-14731"/>
<dbReference type="EMDB" id="EMD-8148"/>
<dbReference type="SMR" id="Q9V2K7"/>
<dbReference type="STRING" id="272844.PAB0035"/>
<dbReference type="KEGG" id="pab:PAB0035"/>
<dbReference type="PATRIC" id="fig|272844.11.peg.77"/>
<dbReference type="eggNOG" id="arCOG04186">
    <property type="taxonomic scope" value="Archaea"/>
</dbReference>
<dbReference type="HOGENOM" id="CLU_062507_1_0_2"/>
<dbReference type="OrthoDB" id="30639at2157"/>
<dbReference type="PhylomeDB" id="Q9V2K7"/>
<dbReference type="Proteomes" id="UP000000810">
    <property type="component" value="Chromosome"/>
</dbReference>
<dbReference type="Proteomes" id="UP000009139">
    <property type="component" value="Chromosome"/>
</dbReference>
<dbReference type="GO" id="GO:1990904">
    <property type="term" value="C:ribonucleoprotein complex"/>
    <property type="evidence" value="ECO:0007669"/>
    <property type="project" value="UniProtKB-KW"/>
</dbReference>
<dbReference type="GO" id="GO:0005840">
    <property type="term" value="C:ribosome"/>
    <property type="evidence" value="ECO:0007669"/>
    <property type="project" value="UniProtKB-KW"/>
</dbReference>
<dbReference type="GO" id="GO:0003735">
    <property type="term" value="F:structural constituent of ribosome"/>
    <property type="evidence" value="ECO:0007669"/>
    <property type="project" value="InterPro"/>
</dbReference>
<dbReference type="GO" id="GO:0006412">
    <property type="term" value="P:translation"/>
    <property type="evidence" value="ECO:0007669"/>
    <property type="project" value="UniProtKB-UniRule"/>
</dbReference>
<dbReference type="HAMAP" id="MF_00359">
    <property type="entry name" value="Ribosomal_eS1"/>
    <property type="match status" value="1"/>
</dbReference>
<dbReference type="InterPro" id="IPR001593">
    <property type="entry name" value="Ribosomal_eS1"/>
</dbReference>
<dbReference type="InterPro" id="IPR030838">
    <property type="entry name" value="Ribosomal_eS1_arc"/>
</dbReference>
<dbReference type="InterPro" id="IPR018281">
    <property type="entry name" value="Ribosomal_eS1_CS"/>
</dbReference>
<dbReference type="NCBIfam" id="NF003142">
    <property type="entry name" value="PRK04057.1"/>
    <property type="match status" value="1"/>
</dbReference>
<dbReference type="PANTHER" id="PTHR11830">
    <property type="entry name" value="40S RIBOSOMAL PROTEIN S3A"/>
    <property type="match status" value="1"/>
</dbReference>
<dbReference type="Pfam" id="PF01015">
    <property type="entry name" value="Ribosomal_S3Ae"/>
    <property type="match status" value="1"/>
</dbReference>
<dbReference type="SMART" id="SM01397">
    <property type="entry name" value="Ribosomal_S3Ae"/>
    <property type="match status" value="1"/>
</dbReference>
<dbReference type="PROSITE" id="PS01191">
    <property type="entry name" value="RIBOSOMAL_S3AE"/>
    <property type="match status" value="1"/>
</dbReference>
<gene>
    <name evidence="1" type="primary">rps3ae</name>
    <name type="ordered locus">PYRAB00680</name>
    <name type="ORF">PAB0035</name>
</gene>
<protein>
    <recommendedName>
        <fullName evidence="1">Small ribosomal subunit protein eS1</fullName>
    </recommendedName>
    <alternativeName>
        <fullName evidence="2">30S ribosomal protein S3Ae</fullName>
    </alternativeName>
    <alternativeName>
        <fullName evidence="1">Ribosomal protein S1e</fullName>
    </alternativeName>
</protein>
<feature type="chain" id="PRO_0000153555" description="Small ribosomal subunit protein eS1">
    <location>
        <begin position="1"/>
        <end position="199"/>
    </location>
</feature>
<feature type="helix" evidence="4">
    <location>
        <begin position="10"/>
        <end position="15"/>
    </location>
</feature>
<feature type="strand" evidence="4">
    <location>
        <begin position="18"/>
        <end position="23"/>
    </location>
</feature>
<feature type="helix" evidence="4">
    <location>
        <begin position="26"/>
        <end position="28"/>
    </location>
</feature>
<feature type="strand" evidence="4">
    <location>
        <begin position="32"/>
        <end position="40"/>
    </location>
</feature>
<feature type="helix" evidence="4">
    <location>
        <begin position="41"/>
        <end position="44"/>
    </location>
</feature>
<feature type="strand" evidence="4">
    <location>
        <begin position="48"/>
        <end position="52"/>
    </location>
</feature>
<feature type="helix" evidence="4">
    <location>
        <begin position="53"/>
        <end position="56"/>
    </location>
</feature>
<feature type="helix" evidence="3">
    <location>
        <begin position="60"/>
        <end position="62"/>
    </location>
</feature>
<feature type="strand" evidence="4">
    <location>
        <begin position="65"/>
        <end position="75"/>
    </location>
</feature>
<feature type="strand" evidence="4">
    <location>
        <begin position="78"/>
        <end position="88"/>
    </location>
</feature>
<feature type="helix" evidence="4">
    <location>
        <begin position="90"/>
        <end position="96"/>
    </location>
</feature>
<feature type="strand" evidence="4">
    <location>
        <begin position="101"/>
        <end position="111"/>
    </location>
</feature>
<feature type="strand" evidence="4">
    <location>
        <begin position="117"/>
        <end position="128"/>
    </location>
</feature>
<feature type="helix" evidence="4">
    <location>
        <begin position="132"/>
        <end position="152"/>
    </location>
</feature>
<feature type="helix" evidence="4">
    <location>
        <begin position="155"/>
        <end position="164"/>
    </location>
</feature>
<feature type="helix" evidence="4">
    <location>
        <begin position="166"/>
        <end position="175"/>
    </location>
</feature>
<feature type="turn" evidence="4">
    <location>
        <begin position="176"/>
        <end position="178"/>
    </location>
</feature>
<feature type="strand" evidence="4">
    <location>
        <begin position="181"/>
        <end position="193"/>
    </location>
</feature>
<name>RS3A_PYRAB</name>
<comment type="similarity">
    <text evidence="1">Belongs to the eukaryotic ribosomal protein eS1 family.</text>
</comment>
<comment type="sequence caution" evidence="2">
    <conflict type="erroneous initiation">
        <sequence resource="EMBL-CDS" id="CAB48991"/>
    </conflict>
    <text>Extended N-terminus.</text>
</comment>
<sequence length="199" mass="22845">MAAKRRVSAAKDKWKLKQWYVIYAPDFFGGVEVGLTPADDPEKVLNRVVEVTLKDITGDFLKGHVKLYFQVYDVKGQNAYTKFKGMKLARSYIRSLVRRRTTRIDGIFNITTKDGYKLRVMAMVIAARRIQTSQERAIRKIMQEIIYKKAEELNFKDFVLEAVNGKIAAEIAKEAKKIYPLKKAEIRKIKVLGEPEVAA</sequence>
<evidence type="ECO:0000255" key="1">
    <source>
        <dbReference type="HAMAP-Rule" id="MF_00359"/>
    </source>
</evidence>
<evidence type="ECO:0000305" key="2"/>
<evidence type="ECO:0007829" key="3">
    <source>
        <dbReference type="PDB" id="7ZAG"/>
    </source>
</evidence>
<evidence type="ECO:0007829" key="4">
    <source>
        <dbReference type="PDB" id="7ZHG"/>
    </source>
</evidence>
<accession>Q9V2K7</accession>
<accession>G8ZFP9</accession>
<reference key="1">
    <citation type="journal article" date="2003" name="Mol. Microbiol.">
        <title>An integrated analysis of the genome of the hyperthermophilic archaeon Pyrococcus abyssi.</title>
        <authorList>
            <person name="Cohen G.N."/>
            <person name="Barbe V."/>
            <person name="Flament D."/>
            <person name="Galperin M."/>
            <person name="Heilig R."/>
            <person name="Lecompte O."/>
            <person name="Poch O."/>
            <person name="Prieur D."/>
            <person name="Querellou J."/>
            <person name="Ripp R."/>
            <person name="Thierry J.-C."/>
            <person name="Van der Oost J."/>
            <person name="Weissenbach J."/>
            <person name="Zivanovic Y."/>
            <person name="Forterre P."/>
        </authorList>
    </citation>
    <scope>NUCLEOTIDE SEQUENCE [LARGE SCALE GENOMIC DNA]</scope>
    <source>
        <strain>GE5 / Orsay</strain>
    </source>
</reference>
<reference key="2">
    <citation type="journal article" date="2012" name="Curr. Microbiol.">
        <title>Re-annotation of two hyperthermophilic archaea Pyrococcus abyssi GE5 and Pyrococcus furiosus DSM 3638.</title>
        <authorList>
            <person name="Gao J."/>
            <person name="Wang J."/>
        </authorList>
    </citation>
    <scope>GENOME REANNOTATION</scope>
    <source>
        <strain>GE5 / Orsay</strain>
    </source>
</reference>